<comment type="function">
    <text evidence="1">Binds the lower part of the 30S subunit head. Binds mRNA in the 70S ribosome, positioning it for translation.</text>
</comment>
<comment type="subunit">
    <text evidence="1">Part of the 30S ribosomal subunit. Forms a tight complex with proteins S10 and S14.</text>
</comment>
<comment type="similarity">
    <text evidence="1">Belongs to the universal ribosomal protein uS3 family.</text>
</comment>
<reference key="1">
    <citation type="journal article" date="2007" name="Microbiology">
        <title>Comparative analysis of the Corynebacterium glutamicum group and complete genome sequence of strain R.</title>
        <authorList>
            <person name="Yukawa H."/>
            <person name="Omumasaba C.A."/>
            <person name="Nonaka H."/>
            <person name="Kos P."/>
            <person name="Okai N."/>
            <person name="Suzuki N."/>
            <person name="Suda M."/>
            <person name="Tsuge Y."/>
            <person name="Watanabe J."/>
            <person name="Ikeda Y."/>
            <person name="Vertes A.A."/>
            <person name="Inui M."/>
        </authorList>
    </citation>
    <scope>NUCLEOTIDE SEQUENCE [LARGE SCALE GENOMIC DNA]</scope>
    <source>
        <strain>R</strain>
    </source>
</reference>
<accession>A4QBI7</accession>
<sequence length="248" mass="28109">MGQKIHPHGLRLGITSDWKSHWYADKSYADYVAEDIKIREFLSKGLDRAGIADVVIERTRDRVRVDIHTARPGIVIGRRGAEADRIRRELEKLTGKQVALNILEVKNVDANAKLVAQSIAEQLTNRVAFRRAMRKAIQSAMRQPQVKGIKVVCSGRLGGAEMSRTERYHEGRVPLHTLRAEIDYGTYEAHTTFGRIGVKVWIYKGDVVGGRRESEINAPAERRGRGDRNARPRRGGQRRQRAEQKQEG</sequence>
<proteinExistence type="inferred from homology"/>
<protein>
    <recommendedName>
        <fullName evidence="1">Small ribosomal subunit protein uS3</fullName>
    </recommendedName>
    <alternativeName>
        <fullName evidence="3">30S ribosomal protein S3</fullName>
    </alternativeName>
</protein>
<dbReference type="EMBL" id="AP009044">
    <property type="protein sequence ID" value="BAF53584.1"/>
    <property type="molecule type" value="Genomic_DNA"/>
</dbReference>
<dbReference type="RefSeq" id="WP_003854298.1">
    <property type="nucleotide sequence ID" value="NC_009342.1"/>
</dbReference>
<dbReference type="SMR" id="A4QBI7"/>
<dbReference type="GeneID" id="1021517"/>
<dbReference type="KEGG" id="cgt:cgR_0614"/>
<dbReference type="HOGENOM" id="CLU_058591_0_0_11"/>
<dbReference type="PhylomeDB" id="A4QBI7"/>
<dbReference type="Proteomes" id="UP000006698">
    <property type="component" value="Chromosome"/>
</dbReference>
<dbReference type="GO" id="GO:0022627">
    <property type="term" value="C:cytosolic small ribosomal subunit"/>
    <property type="evidence" value="ECO:0007669"/>
    <property type="project" value="TreeGrafter"/>
</dbReference>
<dbReference type="GO" id="GO:0003729">
    <property type="term" value="F:mRNA binding"/>
    <property type="evidence" value="ECO:0007669"/>
    <property type="project" value="UniProtKB-UniRule"/>
</dbReference>
<dbReference type="GO" id="GO:0019843">
    <property type="term" value="F:rRNA binding"/>
    <property type="evidence" value="ECO:0007669"/>
    <property type="project" value="UniProtKB-UniRule"/>
</dbReference>
<dbReference type="GO" id="GO:0003735">
    <property type="term" value="F:structural constituent of ribosome"/>
    <property type="evidence" value="ECO:0007669"/>
    <property type="project" value="InterPro"/>
</dbReference>
<dbReference type="GO" id="GO:0006412">
    <property type="term" value="P:translation"/>
    <property type="evidence" value="ECO:0007669"/>
    <property type="project" value="UniProtKB-UniRule"/>
</dbReference>
<dbReference type="CDD" id="cd02412">
    <property type="entry name" value="KH-II_30S_S3"/>
    <property type="match status" value="1"/>
</dbReference>
<dbReference type="FunFam" id="3.30.1140.32:FF:000002">
    <property type="entry name" value="30S ribosomal protein S3"/>
    <property type="match status" value="1"/>
</dbReference>
<dbReference type="FunFam" id="3.30.300.20:FF:000001">
    <property type="entry name" value="30S ribosomal protein S3"/>
    <property type="match status" value="1"/>
</dbReference>
<dbReference type="Gene3D" id="3.30.300.20">
    <property type="match status" value="1"/>
</dbReference>
<dbReference type="Gene3D" id="3.30.1140.32">
    <property type="entry name" value="Ribosomal protein S3, C-terminal domain"/>
    <property type="match status" value="1"/>
</dbReference>
<dbReference type="HAMAP" id="MF_01309_B">
    <property type="entry name" value="Ribosomal_uS3_B"/>
    <property type="match status" value="1"/>
</dbReference>
<dbReference type="InterPro" id="IPR004087">
    <property type="entry name" value="KH_dom"/>
</dbReference>
<dbReference type="InterPro" id="IPR015946">
    <property type="entry name" value="KH_dom-like_a/b"/>
</dbReference>
<dbReference type="InterPro" id="IPR004044">
    <property type="entry name" value="KH_dom_type_2"/>
</dbReference>
<dbReference type="InterPro" id="IPR009019">
    <property type="entry name" value="KH_sf_prok-type"/>
</dbReference>
<dbReference type="InterPro" id="IPR036419">
    <property type="entry name" value="Ribosomal_S3_C_sf"/>
</dbReference>
<dbReference type="InterPro" id="IPR005704">
    <property type="entry name" value="Ribosomal_uS3_bac-typ"/>
</dbReference>
<dbReference type="InterPro" id="IPR001351">
    <property type="entry name" value="Ribosomal_uS3_C"/>
</dbReference>
<dbReference type="InterPro" id="IPR018280">
    <property type="entry name" value="Ribosomal_uS3_CS"/>
</dbReference>
<dbReference type="NCBIfam" id="TIGR01009">
    <property type="entry name" value="rpsC_bact"/>
    <property type="match status" value="1"/>
</dbReference>
<dbReference type="PANTHER" id="PTHR11760">
    <property type="entry name" value="30S/40S RIBOSOMAL PROTEIN S3"/>
    <property type="match status" value="1"/>
</dbReference>
<dbReference type="PANTHER" id="PTHR11760:SF19">
    <property type="entry name" value="SMALL RIBOSOMAL SUBUNIT PROTEIN US3C"/>
    <property type="match status" value="1"/>
</dbReference>
<dbReference type="Pfam" id="PF07650">
    <property type="entry name" value="KH_2"/>
    <property type="match status" value="1"/>
</dbReference>
<dbReference type="Pfam" id="PF00189">
    <property type="entry name" value="Ribosomal_S3_C"/>
    <property type="match status" value="1"/>
</dbReference>
<dbReference type="SMART" id="SM00322">
    <property type="entry name" value="KH"/>
    <property type="match status" value="1"/>
</dbReference>
<dbReference type="SUPFAM" id="SSF54814">
    <property type="entry name" value="Prokaryotic type KH domain (KH-domain type II)"/>
    <property type="match status" value="1"/>
</dbReference>
<dbReference type="SUPFAM" id="SSF54821">
    <property type="entry name" value="Ribosomal protein S3 C-terminal domain"/>
    <property type="match status" value="1"/>
</dbReference>
<dbReference type="PROSITE" id="PS50823">
    <property type="entry name" value="KH_TYPE_2"/>
    <property type="match status" value="1"/>
</dbReference>
<dbReference type="PROSITE" id="PS00548">
    <property type="entry name" value="RIBOSOMAL_S3"/>
    <property type="match status" value="1"/>
</dbReference>
<evidence type="ECO:0000255" key="1">
    <source>
        <dbReference type="HAMAP-Rule" id="MF_01309"/>
    </source>
</evidence>
<evidence type="ECO:0000256" key="2">
    <source>
        <dbReference type="SAM" id="MobiDB-lite"/>
    </source>
</evidence>
<evidence type="ECO:0000305" key="3"/>
<organism>
    <name type="scientific">Corynebacterium glutamicum (strain R)</name>
    <dbReference type="NCBI Taxonomy" id="340322"/>
    <lineage>
        <taxon>Bacteria</taxon>
        <taxon>Bacillati</taxon>
        <taxon>Actinomycetota</taxon>
        <taxon>Actinomycetes</taxon>
        <taxon>Mycobacteriales</taxon>
        <taxon>Corynebacteriaceae</taxon>
        <taxon>Corynebacterium</taxon>
    </lineage>
</organism>
<gene>
    <name evidence="1" type="primary">rpsC</name>
    <name type="ordered locus">cgR_0614</name>
</gene>
<feature type="chain" id="PRO_0000293779" description="Small ribosomal subunit protein uS3">
    <location>
        <begin position="1"/>
        <end position="248"/>
    </location>
</feature>
<feature type="domain" description="KH type-2" evidence="1">
    <location>
        <begin position="38"/>
        <end position="106"/>
    </location>
</feature>
<feature type="region of interest" description="Disordered" evidence="2">
    <location>
        <begin position="214"/>
        <end position="248"/>
    </location>
</feature>
<feature type="compositionally biased region" description="Basic and acidic residues" evidence="2">
    <location>
        <begin position="214"/>
        <end position="230"/>
    </location>
</feature>
<keyword id="KW-0687">Ribonucleoprotein</keyword>
<keyword id="KW-0689">Ribosomal protein</keyword>
<keyword id="KW-0694">RNA-binding</keyword>
<keyword id="KW-0699">rRNA-binding</keyword>
<name>RS3_CORGB</name>